<gene>
    <name evidence="1" type="primary">prfA</name>
    <name type="ordered locus">LAR_0442</name>
</gene>
<organism>
    <name type="scientific">Limosilactobacillus reuteri subsp. reuteri (strain JCM 1112)</name>
    <name type="common">Lactobacillus reuteri</name>
    <dbReference type="NCBI Taxonomy" id="557433"/>
    <lineage>
        <taxon>Bacteria</taxon>
        <taxon>Bacillati</taxon>
        <taxon>Bacillota</taxon>
        <taxon>Bacilli</taxon>
        <taxon>Lactobacillales</taxon>
        <taxon>Lactobacillaceae</taxon>
        <taxon>Limosilactobacillus</taxon>
    </lineage>
</organism>
<evidence type="ECO:0000255" key="1">
    <source>
        <dbReference type="HAMAP-Rule" id="MF_00093"/>
    </source>
</evidence>
<name>RF1_LIMRJ</name>
<reference key="1">
    <citation type="journal article" date="2008" name="DNA Res.">
        <title>Comparative genome analysis of Lactobacillus reuteri and Lactobacillus fermentum reveal a genomic island for reuterin and cobalamin production.</title>
        <authorList>
            <person name="Morita H."/>
            <person name="Toh H."/>
            <person name="Fukuda S."/>
            <person name="Horikawa H."/>
            <person name="Oshima K."/>
            <person name="Suzuki T."/>
            <person name="Murakami M."/>
            <person name="Hisamatsu S."/>
            <person name="Kato Y."/>
            <person name="Takizawa T."/>
            <person name="Fukuoka H."/>
            <person name="Yoshimura T."/>
            <person name="Itoh K."/>
            <person name="O'Sullivan D.J."/>
            <person name="McKay L.L."/>
            <person name="Ohno H."/>
            <person name="Kikuchi J."/>
            <person name="Masaoka T."/>
            <person name="Hattori M."/>
        </authorList>
    </citation>
    <scope>NUCLEOTIDE SEQUENCE [LARGE SCALE GENOMIC DNA]</scope>
    <source>
        <strain>JCM 1112</strain>
    </source>
</reference>
<feature type="chain" id="PRO_1000093469" description="Peptide chain release factor 1">
    <location>
        <begin position="1"/>
        <end position="360"/>
    </location>
</feature>
<feature type="modified residue" description="N5-methylglutamine" evidence="1">
    <location>
        <position position="236"/>
    </location>
</feature>
<protein>
    <recommendedName>
        <fullName evidence="1">Peptide chain release factor 1</fullName>
        <shortName evidence="1">RF-1</shortName>
    </recommendedName>
</protein>
<dbReference type="EMBL" id="AP007281">
    <property type="protein sequence ID" value="BAG24958.1"/>
    <property type="molecule type" value="Genomic_DNA"/>
</dbReference>
<dbReference type="SMR" id="B2G676"/>
<dbReference type="KEGG" id="lrf:LAR_0442"/>
<dbReference type="HOGENOM" id="CLU_036856_0_1_9"/>
<dbReference type="GO" id="GO:0005737">
    <property type="term" value="C:cytoplasm"/>
    <property type="evidence" value="ECO:0007669"/>
    <property type="project" value="UniProtKB-SubCell"/>
</dbReference>
<dbReference type="GO" id="GO:0016149">
    <property type="term" value="F:translation release factor activity, codon specific"/>
    <property type="evidence" value="ECO:0007669"/>
    <property type="project" value="UniProtKB-UniRule"/>
</dbReference>
<dbReference type="FunFam" id="3.30.160.20:FF:000004">
    <property type="entry name" value="Peptide chain release factor 1"/>
    <property type="match status" value="1"/>
</dbReference>
<dbReference type="FunFam" id="3.30.70.1660:FF:000002">
    <property type="entry name" value="Peptide chain release factor 1"/>
    <property type="match status" value="1"/>
</dbReference>
<dbReference type="FunFam" id="3.30.70.1660:FF:000004">
    <property type="entry name" value="Peptide chain release factor 1"/>
    <property type="match status" value="1"/>
</dbReference>
<dbReference type="Gene3D" id="3.30.160.20">
    <property type="match status" value="1"/>
</dbReference>
<dbReference type="Gene3D" id="3.30.70.1660">
    <property type="match status" value="1"/>
</dbReference>
<dbReference type="Gene3D" id="6.10.140.1950">
    <property type="match status" value="1"/>
</dbReference>
<dbReference type="HAMAP" id="MF_00093">
    <property type="entry name" value="Rel_fac_1"/>
    <property type="match status" value="1"/>
</dbReference>
<dbReference type="InterPro" id="IPR005139">
    <property type="entry name" value="PCRF"/>
</dbReference>
<dbReference type="InterPro" id="IPR000352">
    <property type="entry name" value="Pep_chain_release_fac_I"/>
</dbReference>
<dbReference type="InterPro" id="IPR045853">
    <property type="entry name" value="Pep_chain_release_fac_I_sf"/>
</dbReference>
<dbReference type="InterPro" id="IPR050057">
    <property type="entry name" value="Prokaryotic/Mito_RF"/>
</dbReference>
<dbReference type="InterPro" id="IPR004373">
    <property type="entry name" value="RF-1"/>
</dbReference>
<dbReference type="NCBIfam" id="TIGR00019">
    <property type="entry name" value="prfA"/>
    <property type="match status" value="1"/>
</dbReference>
<dbReference type="NCBIfam" id="NF001859">
    <property type="entry name" value="PRK00591.1"/>
    <property type="match status" value="1"/>
</dbReference>
<dbReference type="PANTHER" id="PTHR43804">
    <property type="entry name" value="LD18447P"/>
    <property type="match status" value="1"/>
</dbReference>
<dbReference type="PANTHER" id="PTHR43804:SF7">
    <property type="entry name" value="LD18447P"/>
    <property type="match status" value="1"/>
</dbReference>
<dbReference type="Pfam" id="PF03462">
    <property type="entry name" value="PCRF"/>
    <property type="match status" value="1"/>
</dbReference>
<dbReference type="Pfam" id="PF00472">
    <property type="entry name" value="RF-1"/>
    <property type="match status" value="1"/>
</dbReference>
<dbReference type="SMART" id="SM00937">
    <property type="entry name" value="PCRF"/>
    <property type="match status" value="1"/>
</dbReference>
<dbReference type="SUPFAM" id="SSF75620">
    <property type="entry name" value="Release factor"/>
    <property type="match status" value="1"/>
</dbReference>
<dbReference type="PROSITE" id="PS00745">
    <property type="entry name" value="RF_PROK_I"/>
    <property type="match status" value="1"/>
</dbReference>
<keyword id="KW-0963">Cytoplasm</keyword>
<keyword id="KW-0488">Methylation</keyword>
<keyword id="KW-0648">Protein biosynthesis</keyword>
<proteinExistence type="inferred from homology"/>
<sequence>MEEIFDKLQAVADRYDELNELISDPEVIADSQRFMKLSKEEGSLRETVEKYNQYKKVTQTISDDEELLRETNDDDLTALTKEELAEAREEQAQLEKELEVLLIPKDPNDDKNIIMEIRGAAGGDEASLFAADLYNMYLRYAEKQGWKVEVVDRNETEVGGFKEIALMITGDKVYSKLKFENGAHRVQRVPVTESAGRVHTSTATVGVMPEAEDVDVDIDPKDIRVDVYRSSGAGGQHVNKTSSAVRMTHLPTGIVVAMQDERSQQQNRAKAMRILKSRVYDYYQQQEQSAYDQKRKDAIGTGDRSERIRTYNYPQNRVTDHRIGLTLNKLDKIMAGDLDEIIEALIVADQTQKLEQLRNE</sequence>
<comment type="function">
    <text evidence="1">Peptide chain release factor 1 directs the termination of translation in response to the peptide chain termination codons UAG and UAA.</text>
</comment>
<comment type="subcellular location">
    <subcellularLocation>
        <location evidence="1">Cytoplasm</location>
    </subcellularLocation>
</comment>
<comment type="PTM">
    <text evidence="1">Methylated by PrmC. Methylation increases the termination efficiency of RF1.</text>
</comment>
<comment type="similarity">
    <text evidence="1">Belongs to the prokaryotic/mitochondrial release factor family.</text>
</comment>
<accession>B2G676</accession>